<organism>
    <name type="scientific">Sulfurovum sp. (strain NBC37-1)</name>
    <dbReference type="NCBI Taxonomy" id="387093"/>
    <lineage>
        <taxon>Bacteria</taxon>
        <taxon>Pseudomonadati</taxon>
        <taxon>Campylobacterota</taxon>
        <taxon>Epsilonproteobacteria</taxon>
        <taxon>Campylobacterales</taxon>
        <taxon>Sulfurovaceae</taxon>
        <taxon>Sulfurovum</taxon>
    </lineage>
</organism>
<reference key="1">
    <citation type="journal article" date="2007" name="Proc. Natl. Acad. Sci. U.S.A.">
        <title>Deep-sea vent epsilon-proteobacterial genomes provide insights into emergence of pathogens.</title>
        <authorList>
            <person name="Nakagawa S."/>
            <person name="Takaki Y."/>
            <person name="Shimamura S."/>
            <person name="Reysenbach A.-L."/>
            <person name="Takai K."/>
            <person name="Horikoshi K."/>
        </authorList>
    </citation>
    <scope>NUCLEOTIDE SEQUENCE [LARGE SCALE GENOMIC DNA]</scope>
    <source>
        <strain>NBC37-1</strain>
    </source>
</reference>
<name>ILVD_SULNB</name>
<accession>A6QD02</accession>
<feature type="chain" id="PRO_0000321607" description="Dihydroxy-acid dehydratase">
    <location>
        <begin position="1"/>
        <end position="563"/>
    </location>
</feature>
<feature type="active site" description="Proton acceptor" evidence="1">
    <location>
        <position position="477"/>
    </location>
</feature>
<feature type="binding site" evidence="1">
    <location>
        <position position="79"/>
    </location>
    <ligand>
        <name>Mg(2+)</name>
        <dbReference type="ChEBI" id="CHEBI:18420"/>
    </ligand>
</feature>
<feature type="binding site" evidence="1">
    <location>
        <position position="120"/>
    </location>
    <ligand>
        <name>[2Fe-2S] cluster</name>
        <dbReference type="ChEBI" id="CHEBI:190135"/>
    </ligand>
</feature>
<feature type="binding site" evidence="1">
    <location>
        <position position="121"/>
    </location>
    <ligand>
        <name>Mg(2+)</name>
        <dbReference type="ChEBI" id="CHEBI:18420"/>
    </ligand>
</feature>
<feature type="binding site" description="via carbamate group" evidence="1">
    <location>
        <position position="122"/>
    </location>
    <ligand>
        <name>Mg(2+)</name>
        <dbReference type="ChEBI" id="CHEBI:18420"/>
    </ligand>
</feature>
<feature type="binding site" evidence="1">
    <location>
        <position position="193"/>
    </location>
    <ligand>
        <name>[2Fe-2S] cluster</name>
        <dbReference type="ChEBI" id="CHEBI:190135"/>
    </ligand>
</feature>
<feature type="binding site" evidence="1">
    <location>
        <position position="451"/>
    </location>
    <ligand>
        <name>Mg(2+)</name>
        <dbReference type="ChEBI" id="CHEBI:18420"/>
    </ligand>
</feature>
<feature type="modified residue" description="N6-carboxylysine" evidence="1">
    <location>
        <position position="122"/>
    </location>
</feature>
<keyword id="KW-0001">2Fe-2S</keyword>
<keyword id="KW-0028">Amino-acid biosynthesis</keyword>
<keyword id="KW-0100">Branched-chain amino acid biosynthesis</keyword>
<keyword id="KW-0408">Iron</keyword>
<keyword id="KW-0411">Iron-sulfur</keyword>
<keyword id="KW-0456">Lyase</keyword>
<keyword id="KW-0460">Magnesium</keyword>
<keyword id="KW-0479">Metal-binding</keyword>
<evidence type="ECO:0000255" key="1">
    <source>
        <dbReference type="HAMAP-Rule" id="MF_00012"/>
    </source>
</evidence>
<sequence>MMRSDEIKKGYNRAPHRSLLRATGLKDEDFDKPFIGVANSFIELIPGHYFLNKVAEVIKNEIRANGCVPFEFNTIGVDDGIAMGHDGMLYSLPSREIIANSIETVMNAHKLDAMIAIPNCDKIVPGMIMGALRVDVPTVFVSGGPMAAGHMDDGTPIDLATVFEGVGEYEAGEITEETLAEMECNACPSGGSCSGMFTANSMNTLMEAMGIALPGNGTILALTPERTELYKKAARRICEIAKSEAAEREKFRMRNILNENAVRNAFAVDMAMGGSSNTVLHMLAIAKEAEVDFNLEDINMISKRVSHIAKISPSLTTVHMEDINTAGGVSSVMHEMHKRGDDILIDNPTITGESLYERIKDARILDTNIIHTIDNPFSEVGGLAILYGNLAEQGAVIKTAGITGDRAFTGTAVCFDSQDEAIEGILSGKVKAGNVVVIRYEGPKGGPGMQEMLSPTSLIMGMGLGDKVALITDGRFSGATRGASIGHVSPEAAEGGLIGLLEDGDEIHLDVDNYILEAKLTFEEIAERKDKFKPVVKPLKSKWLRQYRALVTNASNGAVLEAE</sequence>
<comment type="function">
    <text evidence="1">Functions in the biosynthesis of branched-chain amino acids. Catalyzes the dehydration of (2R,3R)-2,3-dihydroxy-3-methylpentanoate (2,3-dihydroxy-3-methylvalerate) into 2-oxo-3-methylpentanoate (2-oxo-3-methylvalerate) and of (2R)-2,3-dihydroxy-3-methylbutanoate (2,3-dihydroxyisovalerate) into 2-oxo-3-methylbutanoate (2-oxoisovalerate), the penultimate precursor to L-isoleucine and L-valine, respectively.</text>
</comment>
<comment type="catalytic activity">
    <reaction evidence="1">
        <text>(2R)-2,3-dihydroxy-3-methylbutanoate = 3-methyl-2-oxobutanoate + H2O</text>
        <dbReference type="Rhea" id="RHEA:24809"/>
        <dbReference type="ChEBI" id="CHEBI:11851"/>
        <dbReference type="ChEBI" id="CHEBI:15377"/>
        <dbReference type="ChEBI" id="CHEBI:49072"/>
        <dbReference type="EC" id="4.2.1.9"/>
    </reaction>
    <physiologicalReaction direction="left-to-right" evidence="1">
        <dbReference type="Rhea" id="RHEA:24810"/>
    </physiologicalReaction>
</comment>
<comment type="catalytic activity">
    <reaction evidence="1">
        <text>(2R,3R)-2,3-dihydroxy-3-methylpentanoate = (S)-3-methyl-2-oxopentanoate + H2O</text>
        <dbReference type="Rhea" id="RHEA:27694"/>
        <dbReference type="ChEBI" id="CHEBI:15377"/>
        <dbReference type="ChEBI" id="CHEBI:35146"/>
        <dbReference type="ChEBI" id="CHEBI:49258"/>
        <dbReference type="EC" id="4.2.1.9"/>
    </reaction>
    <physiologicalReaction direction="left-to-right" evidence="1">
        <dbReference type="Rhea" id="RHEA:27695"/>
    </physiologicalReaction>
</comment>
<comment type="cofactor">
    <cofactor evidence="1">
        <name>[2Fe-2S] cluster</name>
        <dbReference type="ChEBI" id="CHEBI:190135"/>
    </cofactor>
    <text evidence="1">Binds 1 [2Fe-2S] cluster per subunit. This cluster acts as a Lewis acid cofactor.</text>
</comment>
<comment type="cofactor">
    <cofactor evidence="1">
        <name>Mg(2+)</name>
        <dbReference type="ChEBI" id="CHEBI:18420"/>
    </cofactor>
</comment>
<comment type="pathway">
    <text evidence="1">Amino-acid biosynthesis; L-isoleucine biosynthesis; L-isoleucine from 2-oxobutanoate: step 3/4.</text>
</comment>
<comment type="pathway">
    <text evidence="1">Amino-acid biosynthesis; L-valine biosynthesis; L-valine from pyruvate: step 3/4.</text>
</comment>
<comment type="subunit">
    <text evidence="1">Homodimer.</text>
</comment>
<comment type="similarity">
    <text evidence="1">Belongs to the IlvD/Edd family.</text>
</comment>
<proteinExistence type="inferred from homology"/>
<protein>
    <recommendedName>
        <fullName evidence="1">Dihydroxy-acid dehydratase</fullName>
        <shortName evidence="1">DAD</shortName>
        <ecNumber evidence="1">4.2.1.9</ecNumber>
    </recommendedName>
</protein>
<gene>
    <name evidence="1" type="primary">ilvD</name>
    <name type="ordered locus">SUN_2427</name>
</gene>
<dbReference type="EC" id="4.2.1.9" evidence="1"/>
<dbReference type="EMBL" id="AP009179">
    <property type="protein sequence ID" value="BAF73361.1"/>
    <property type="molecule type" value="Genomic_DNA"/>
</dbReference>
<dbReference type="SMR" id="A6QD02"/>
<dbReference type="STRING" id="387093.SUN_2427"/>
<dbReference type="KEGG" id="sun:SUN_2427"/>
<dbReference type="eggNOG" id="COG0129">
    <property type="taxonomic scope" value="Bacteria"/>
</dbReference>
<dbReference type="HOGENOM" id="CLU_014271_4_2_7"/>
<dbReference type="UniPathway" id="UPA00047">
    <property type="reaction ID" value="UER00057"/>
</dbReference>
<dbReference type="UniPathway" id="UPA00049">
    <property type="reaction ID" value="UER00061"/>
</dbReference>
<dbReference type="Proteomes" id="UP000006378">
    <property type="component" value="Chromosome"/>
</dbReference>
<dbReference type="GO" id="GO:0005829">
    <property type="term" value="C:cytosol"/>
    <property type="evidence" value="ECO:0007669"/>
    <property type="project" value="TreeGrafter"/>
</dbReference>
<dbReference type="GO" id="GO:0051537">
    <property type="term" value="F:2 iron, 2 sulfur cluster binding"/>
    <property type="evidence" value="ECO:0007669"/>
    <property type="project" value="UniProtKB-UniRule"/>
</dbReference>
<dbReference type="GO" id="GO:0004160">
    <property type="term" value="F:dihydroxy-acid dehydratase activity"/>
    <property type="evidence" value="ECO:0007669"/>
    <property type="project" value="UniProtKB-UniRule"/>
</dbReference>
<dbReference type="GO" id="GO:0000287">
    <property type="term" value="F:magnesium ion binding"/>
    <property type="evidence" value="ECO:0007669"/>
    <property type="project" value="UniProtKB-UniRule"/>
</dbReference>
<dbReference type="GO" id="GO:0009097">
    <property type="term" value="P:isoleucine biosynthetic process"/>
    <property type="evidence" value="ECO:0007669"/>
    <property type="project" value="UniProtKB-UniRule"/>
</dbReference>
<dbReference type="GO" id="GO:0009099">
    <property type="term" value="P:L-valine biosynthetic process"/>
    <property type="evidence" value="ECO:0007669"/>
    <property type="project" value="UniProtKB-UniRule"/>
</dbReference>
<dbReference type="FunFam" id="3.50.30.80:FF:000001">
    <property type="entry name" value="Dihydroxy-acid dehydratase"/>
    <property type="match status" value="1"/>
</dbReference>
<dbReference type="Gene3D" id="3.50.30.80">
    <property type="entry name" value="IlvD/EDD C-terminal domain-like"/>
    <property type="match status" value="1"/>
</dbReference>
<dbReference type="HAMAP" id="MF_00012">
    <property type="entry name" value="IlvD"/>
    <property type="match status" value="1"/>
</dbReference>
<dbReference type="InterPro" id="IPR042096">
    <property type="entry name" value="Dihydro-acid_dehy_C"/>
</dbReference>
<dbReference type="InterPro" id="IPR004404">
    <property type="entry name" value="DihydroxyA_deHydtase"/>
</dbReference>
<dbReference type="InterPro" id="IPR020558">
    <property type="entry name" value="DiOHA_6PGluconate_deHydtase_CS"/>
</dbReference>
<dbReference type="InterPro" id="IPR056740">
    <property type="entry name" value="ILV_EDD_C"/>
</dbReference>
<dbReference type="InterPro" id="IPR000581">
    <property type="entry name" value="ILV_EDD_N"/>
</dbReference>
<dbReference type="InterPro" id="IPR037237">
    <property type="entry name" value="IlvD/EDD_N"/>
</dbReference>
<dbReference type="NCBIfam" id="TIGR00110">
    <property type="entry name" value="ilvD"/>
    <property type="match status" value="1"/>
</dbReference>
<dbReference type="NCBIfam" id="NF002068">
    <property type="entry name" value="PRK00911.1"/>
    <property type="match status" value="1"/>
</dbReference>
<dbReference type="PANTHER" id="PTHR43661">
    <property type="entry name" value="D-XYLONATE DEHYDRATASE"/>
    <property type="match status" value="1"/>
</dbReference>
<dbReference type="PANTHER" id="PTHR43661:SF3">
    <property type="entry name" value="D-XYLONATE DEHYDRATASE YAGF-RELATED"/>
    <property type="match status" value="1"/>
</dbReference>
<dbReference type="Pfam" id="PF24877">
    <property type="entry name" value="ILV_EDD_C"/>
    <property type="match status" value="1"/>
</dbReference>
<dbReference type="Pfam" id="PF00920">
    <property type="entry name" value="ILVD_EDD_N"/>
    <property type="match status" value="1"/>
</dbReference>
<dbReference type="SUPFAM" id="SSF143975">
    <property type="entry name" value="IlvD/EDD N-terminal domain-like"/>
    <property type="match status" value="1"/>
</dbReference>
<dbReference type="SUPFAM" id="SSF52016">
    <property type="entry name" value="LeuD/IlvD-like"/>
    <property type="match status" value="1"/>
</dbReference>
<dbReference type="PROSITE" id="PS00886">
    <property type="entry name" value="ILVD_EDD_1"/>
    <property type="match status" value="1"/>
</dbReference>
<dbReference type="PROSITE" id="PS00887">
    <property type="entry name" value="ILVD_EDD_2"/>
    <property type="match status" value="1"/>
</dbReference>